<dbReference type="EC" id="2.7.11.1"/>
<dbReference type="EMBL" id="AAFI02000013">
    <property type="protein sequence ID" value="EAL69564.1"/>
    <property type="molecule type" value="Genomic_DNA"/>
</dbReference>
<dbReference type="RefSeq" id="XP_643567.1">
    <property type="nucleotide sequence ID" value="XM_638475.1"/>
</dbReference>
<dbReference type="SMR" id="Q86A12"/>
<dbReference type="FunCoup" id="Q86A12">
    <property type="interactions" value="736"/>
</dbReference>
<dbReference type="STRING" id="44689.Q86A12"/>
<dbReference type="PaxDb" id="44689-DDB0230135"/>
<dbReference type="EnsemblProtists" id="EAL69564">
    <property type="protein sequence ID" value="EAL69564"/>
    <property type="gene ID" value="DDB_G0275627"/>
</dbReference>
<dbReference type="GeneID" id="8620153"/>
<dbReference type="KEGG" id="ddi:DDB_G0275627"/>
<dbReference type="dictyBase" id="DDB_G0275627">
    <property type="gene designation" value="sky1"/>
</dbReference>
<dbReference type="VEuPathDB" id="AmoebaDB:DDB_G0275627"/>
<dbReference type="eggNOG" id="KOG1290">
    <property type="taxonomic scope" value="Eukaryota"/>
</dbReference>
<dbReference type="HOGENOM" id="CLU_000288_81_12_1"/>
<dbReference type="InParanoid" id="Q86A12"/>
<dbReference type="OMA" id="NHKGPNG"/>
<dbReference type="PhylomeDB" id="Q86A12"/>
<dbReference type="PRO" id="PR:Q86A12"/>
<dbReference type="Proteomes" id="UP000002195">
    <property type="component" value="Chromosome 2"/>
</dbReference>
<dbReference type="GO" id="GO:0005737">
    <property type="term" value="C:cytoplasm"/>
    <property type="evidence" value="ECO:0000318"/>
    <property type="project" value="GO_Central"/>
</dbReference>
<dbReference type="GO" id="GO:0005634">
    <property type="term" value="C:nucleus"/>
    <property type="evidence" value="ECO:0000318"/>
    <property type="project" value="GO_Central"/>
</dbReference>
<dbReference type="GO" id="GO:0005524">
    <property type="term" value="F:ATP binding"/>
    <property type="evidence" value="ECO:0007669"/>
    <property type="project" value="UniProtKB-KW"/>
</dbReference>
<dbReference type="GO" id="GO:0106310">
    <property type="term" value="F:protein serine kinase activity"/>
    <property type="evidence" value="ECO:0007669"/>
    <property type="project" value="RHEA"/>
</dbReference>
<dbReference type="GO" id="GO:0004674">
    <property type="term" value="F:protein serine/threonine kinase activity"/>
    <property type="evidence" value="ECO:0000318"/>
    <property type="project" value="GO_Central"/>
</dbReference>
<dbReference type="GO" id="GO:0050684">
    <property type="term" value="P:regulation of mRNA processing"/>
    <property type="evidence" value="ECO:0000318"/>
    <property type="project" value="GO_Central"/>
</dbReference>
<dbReference type="GO" id="GO:0000245">
    <property type="term" value="P:spliceosomal complex assembly"/>
    <property type="evidence" value="ECO:0000318"/>
    <property type="project" value="GO_Central"/>
</dbReference>
<dbReference type="FunFam" id="1.10.510.10:FF:001654">
    <property type="entry name" value="SRSF protein kinase 3"/>
    <property type="match status" value="1"/>
</dbReference>
<dbReference type="Gene3D" id="3.30.200.20">
    <property type="entry name" value="Phosphorylase Kinase, domain 1"/>
    <property type="match status" value="1"/>
</dbReference>
<dbReference type="Gene3D" id="1.10.510.10">
    <property type="entry name" value="Transferase(Phosphotransferase) domain 1"/>
    <property type="match status" value="1"/>
</dbReference>
<dbReference type="InterPro" id="IPR011009">
    <property type="entry name" value="Kinase-like_dom_sf"/>
</dbReference>
<dbReference type="InterPro" id="IPR000719">
    <property type="entry name" value="Prot_kinase_dom"/>
</dbReference>
<dbReference type="InterPro" id="IPR008271">
    <property type="entry name" value="Ser/Thr_kinase_AS"/>
</dbReference>
<dbReference type="InterPro" id="IPR051334">
    <property type="entry name" value="SRPK"/>
</dbReference>
<dbReference type="PANTHER" id="PTHR47634">
    <property type="entry name" value="PROTEIN KINASE DOMAIN-CONTAINING PROTEIN-RELATED"/>
    <property type="match status" value="1"/>
</dbReference>
<dbReference type="PANTHER" id="PTHR47634:SF9">
    <property type="entry name" value="PROTEIN KINASE DOMAIN-CONTAINING PROTEIN-RELATED"/>
    <property type="match status" value="1"/>
</dbReference>
<dbReference type="Pfam" id="PF00069">
    <property type="entry name" value="Pkinase"/>
    <property type="match status" value="2"/>
</dbReference>
<dbReference type="SMART" id="SM00220">
    <property type="entry name" value="S_TKc"/>
    <property type="match status" value="1"/>
</dbReference>
<dbReference type="SUPFAM" id="SSF56112">
    <property type="entry name" value="Protein kinase-like (PK-like)"/>
    <property type="match status" value="1"/>
</dbReference>
<dbReference type="PROSITE" id="PS50011">
    <property type="entry name" value="PROTEIN_KINASE_DOM"/>
    <property type="match status" value="1"/>
</dbReference>
<dbReference type="PROSITE" id="PS00108">
    <property type="entry name" value="PROTEIN_KINASE_ST"/>
    <property type="match status" value="1"/>
</dbReference>
<feature type="chain" id="PRO_0000358898" description="Probable serine/threonine-protein kinase sky1">
    <location>
        <begin position="1"/>
        <end position="656"/>
    </location>
</feature>
<feature type="domain" description="Protein kinase" evidence="1">
    <location>
        <begin position="135"/>
        <end position="648"/>
    </location>
</feature>
<feature type="region of interest" description="Disordered" evidence="3">
    <location>
        <begin position="1"/>
        <end position="127"/>
    </location>
</feature>
<feature type="region of interest" description="Disordered" evidence="3">
    <location>
        <begin position="157"/>
        <end position="185"/>
    </location>
</feature>
<feature type="region of interest" description="Disordered" evidence="3">
    <location>
        <begin position="330"/>
        <end position="454"/>
    </location>
</feature>
<feature type="compositionally biased region" description="Gly residues" evidence="3">
    <location>
        <begin position="16"/>
        <end position="48"/>
    </location>
</feature>
<feature type="compositionally biased region" description="Low complexity" evidence="3">
    <location>
        <begin position="49"/>
        <end position="64"/>
    </location>
</feature>
<feature type="compositionally biased region" description="Low complexity" evidence="3">
    <location>
        <begin position="72"/>
        <end position="89"/>
    </location>
</feature>
<feature type="compositionally biased region" description="Polar residues" evidence="3">
    <location>
        <begin position="96"/>
        <end position="108"/>
    </location>
</feature>
<feature type="compositionally biased region" description="Low complexity" evidence="3">
    <location>
        <begin position="160"/>
        <end position="179"/>
    </location>
</feature>
<feature type="compositionally biased region" description="Low complexity" evidence="3">
    <location>
        <begin position="332"/>
        <end position="355"/>
    </location>
</feature>
<feature type="compositionally biased region" description="Basic and acidic residues" evidence="3">
    <location>
        <begin position="383"/>
        <end position="401"/>
    </location>
</feature>
<feature type="compositionally biased region" description="Basic and acidic residues" evidence="3">
    <location>
        <begin position="413"/>
        <end position="440"/>
    </location>
</feature>
<feature type="compositionally biased region" description="Low complexity" evidence="3">
    <location>
        <begin position="441"/>
        <end position="454"/>
    </location>
</feature>
<feature type="active site" description="Proton acceptor" evidence="1 2">
    <location>
        <position position="298"/>
    </location>
</feature>
<feature type="binding site" evidence="1">
    <location>
        <begin position="141"/>
        <end position="149"/>
    </location>
    <ligand>
        <name>ATP</name>
        <dbReference type="ChEBI" id="CHEBI:30616"/>
    </ligand>
</feature>
<feature type="binding site" evidence="1">
    <location>
        <position position="197"/>
    </location>
    <ligand>
        <name>ATP</name>
        <dbReference type="ChEBI" id="CHEBI:30616"/>
    </ligand>
</feature>
<accession>Q86A12</accession>
<accession>Q552W1</accession>
<comment type="catalytic activity">
    <reaction>
        <text>L-seryl-[protein] + ATP = O-phospho-L-seryl-[protein] + ADP + H(+)</text>
        <dbReference type="Rhea" id="RHEA:17989"/>
        <dbReference type="Rhea" id="RHEA-COMP:9863"/>
        <dbReference type="Rhea" id="RHEA-COMP:11604"/>
        <dbReference type="ChEBI" id="CHEBI:15378"/>
        <dbReference type="ChEBI" id="CHEBI:29999"/>
        <dbReference type="ChEBI" id="CHEBI:30616"/>
        <dbReference type="ChEBI" id="CHEBI:83421"/>
        <dbReference type="ChEBI" id="CHEBI:456216"/>
        <dbReference type="EC" id="2.7.11.1"/>
    </reaction>
</comment>
<comment type="catalytic activity">
    <reaction>
        <text>L-threonyl-[protein] + ATP = O-phospho-L-threonyl-[protein] + ADP + H(+)</text>
        <dbReference type="Rhea" id="RHEA:46608"/>
        <dbReference type="Rhea" id="RHEA-COMP:11060"/>
        <dbReference type="Rhea" id="RHEA-COMP:11605"/>
        <dbReference type="ChEBI" id="CHEBI:15378"/>
        <dbReference type="ChEBI" id="CHEBI:30013"/>
        <dbReference type="ChEBI" id="CHEBI:30616"/>
        <dbReference type="ChEBI" id="CHEBI:61977"/>
        <dbReference type="ChEBI" id="CHEBI:456216"/>
        <dbReference type="EC" id="2.7.11.1"/>
    </reaction>
</comment>
<comment type="similarity">
    <text evidence="4">Belongs to the protein kinase superfamily. CMGC Ser/Thr protein kinase family.</text>
</comment>
<gene>
    <name type="primary">sky1</name>
    <name type="ORF">DDB_G0275627</name>
</gene>
<organism>
    <name type="scientific">Dictyostelium discoideum</name>
    <name type="common">Social amoeba</name>
    <dbReference type="NCBI Taxonomy" id="44689"/>
    <lineage>
        <taxon>Eukaryota</taxon>
        <taxon>Amoebozoa</taxon>
        <taxon>Evosea</taxon>
        <taxon>Eumycetozoa</taxon>
        <taxon>Dictyostelia</taxon>
        <taxon>Dictyosteliales</taxon>
        <taxon>Dictyosteliaceae</taxon>
        <taxon>Dictyostelium</taxon>
    </lineage>
</organism>
<proteinExistence type="inferred from homology"/>
<reference key="1">
    <citation type="journal article" date="2002" name="Nature">
        <title>Sequence and analysis of chromosome 2 of Dictyostelium discoideum.</title>
        <authorList>
            <person name="Gloeckner G."/>
            <person name="Eichinger L."/>
            <person name="Szafranski K."/>
            <person name="Pachebat J.A."/>
            <person name="Bankier A.T."/>
            <person name="Dear P.H."/>
            <person name="Lehmann R."/>
            <person name="Baumgart C."/>
            <person name="Parra G."/>
            <person name="Abril J.F."/>
            <person name="Guigo R."/>
            <person name="Kumpf K."/>
            <person name="Tunggal B."/>
            <person name="Cox E.C."/>
            <person name="Quail M.A."/>
            <person name="Platzer M."/>
            <person name="Rosenthal A."/>
            <person name="Noegel A.A."/>
        </authorList>
    </citation>
    <scope>NUCLEOTIDE SEQUENCE [LARGE SCALE GENOMIC DNA]</scope>
    <source>
        <strain>AX4</strain>
    </source>
</reference>
<reference key="2">
    <citation type="journal article" date="2005" name="Nature">
        <title>The genome of the social amoeba Dictyostelium discoideum.</title>
        <authorList>
            <person name="Eichinger L."/>
            <person name="Pachebat J.A."/>
            <person name="Gloeckner G."/>
            <person name="Rajandream M.A."/>
            <person name="Sucgang R."/>
            <person name="Berriman M."/>
            <person name="Song J."/>
            <person name="Olsen R."/>
            <person name="Szafranski K."/>
            <person name="Xu Q."/>
            <person name="Tunggal B."/>
            <person name="Kummerfeld S."/>
            <person name="Madera M."/>
            <person name="Konfortov B.A."/>
            <person name="Rivero F."/>
            <person name="Bankier A.T."/>
            <person name="Lehmann R."/>
            <person name="Hamlin N."/>
            <person name="Davies R."/>
            <person name="Gaudet P."/>
            <person name="Fey P."/>
            <person name="Pilcher K."/>
            <person name="Chen G."/>
            <person name="Saunders D."/>
            <person name="Sodergren E.J."/>
            <person name="Davis P."/>
            <person name="Kerhornou A."/>
            <person name="Nie X."/>
            <person name="Hall N."/>
            <person name="Anjard C."/>
            <person name="Hemphill L."/>
            <person name="Bason N."/>
            <person name="Farbrother P."/>
            <person name="Desany B."/>
            <person name="Just E."/>
            <person name="Morio T."/>
            <person name="Rost R."/>
            <person name="Churcher C.M."/>
            <person name="Cooper J."/>
            <person name="Haydock S."/>
            <person name="van Driessche N."/>
            <person name="Cronin A."/>
            <person name="Goodhead I."/>
            <person name="Muzny D.M."/>
            <person name="Mourier T."/>
            <person name="Pain A."/>
            <person name="Lu M."/>
            <person name="Harper D."/>
            <person name="Lindsay R."/>
            <person name="Hauser H."/>
            <person name="James K.D."/>
            <person name="Quiles M."/>
            <person name="Madan Babu M."/>
            <person name="Saito T."/>
            <person name="Buchrieser C."/>
            <person name="Wardroper A."/>
            <person name="Felder M."/>
            <person name="Thangavelu M."/>
            <person name="Johnson D."/>
            <person name="Knights A."/>
            <person name="Loulseged H."/>
            <person name="Mungall K.L."/>
            <person name="Oliver K."/>
            <person name="Price C."/>
            <person name="Quail M.A."/>
            <person name="Urushihara H."/>
            <person name="Hernandez J."/>
            <person name="Rabbinowitsch E."/>
            <person name="Steffen D."/>
            <person name="Sanders M."/>
            <person name="Ma J."/>
            <person name="Kohara Y."/>
            <person name="Sharp S."/>
            <person name="Simmonds M.N."/>
            <person name="Spiegler S."/>
            <person name="Tivey A."/>
            <person name="Sugano S."/>
            <person name="White B."/>
            <person name="Walker D."/>
            <person name="Woodward J.R."/>
            <person name="Winckler T."/>
            <person name="Tanaka Y."/>
            <person name="Shaulsky G."/>
            <person name="Schleicher M."/>
            <person name="Weinstock G.M."/>
            <person name="Rosenthal A."/>
            <person name="Cox E.C."/>
            <person name="Chisholm R.L."/>
            <person name="Gibbs R.A."/>
            <person name="Loomis W.F."/>
            <person name="Platzer M."/>
            <person name="Kay R.R."/>
            <person name="Williams J.G."/>
            <person name="Dear P.H."/>
            <person name="Noegel A.A."/>
            <person name="Barrell B.G."/>
            <person name="Kuspa A."/>
        </authorList>
    </citation>
    <scope>NUCLEOTIDE SEQUENCE [LARGE SCALE GENOMIC DNA]</scope>
    <source>
        <strain>AX4</strain>
    </source>
</reference>
<evidence type="ECO:0000255" key="1">
    <source>
        <dbReference type="PROSITE-ProRule" id="PRU00159"/>
    </source>
</evidence>
<evidence type="ECO:0000255" key="2">
    <source>
        <dbReference type="PROSITE-ProRule" id="PRU10027"/>
    </source>
</evidence>
<evidence type="ECO:0000256" key="3">
    <source>
        <dbReference type="SAM" id="MobiDB-lite"/>
    </source>
</evidence>
<evidence type="ECO:0000305" key="4"/>
<name>SKY1_DICDI</name>
<sequence>MSDIQQDSTSTTLGGTSLGGTSLGGTSLGGTSLGGTSLGGTSLGGTSLGGSTTTSTTTPKSTNSKNKKKKQTSSNNNNNNNNNNNNNNENNRDNDAGSSNKSFMPLNNNEDEGTKDYKQGGYHPVRRNDVYGNRYQVVDKLGWGHFSTVWLCNDKDTPITTSSSSSSTTTTTTSSSSNGNGNGNGGNVIGYKQVALKIVRSARTYSETAEDEIKILNAISKYNAQDKCVARLLDHFTHRGPNGRHYCMVFELLGNNLLDLIKHHRYRGMPITLVKTLMKQTLIALDYIHTKCKIIHTDLKPENVLLEKSFDFFTSNDYIWSEKYGYFKNRTSSSNKQSQQQQQPQQQQSQQNINDYSDDSDDSHSDYSDSEDELKNKGNKKSSNRDRDNNKNKNIKKDDNKSSVNEINNISKENTDNKDLNSSEENKKEEEQQQNKKEEPTTTTTTATATATTTTTTGTEEFKFVNGISYKFKKNNELFNENHYPRAQLVDLGNACWTDKHFTDDIQTRQYRAPEAIVKAKWGTPVDIWSAACMAFELATGDHLFKPKSGKGFEKSDDHLALMIELLGKPPRFIFAGGDESRVYFTHKGDLRKIPDLSDQWPLFSVLTEKYKFSIQEAKDFEAFLLPMLNYLPEKRATAKDCLNHTWLKDVPPFLN</sequence>
<keyword id="KW-0067">ATP-binding</keyword>
<keyword id="KW-0418">Kinase</keyword>
<keyword id="KW-0547">Nucleotide-binding</keyword>
<keyword id="KW-1185">Reference proteome</keyword>
<keyword id="KW-0723">Serine/threonine-protein kinase</keyword>
<keyword id="KW-0808">Transferase</keyword>
<protein>
    <recommendedName>
        <fullName>Probable serine/threonine-protein kinase sky1</fullName>
        <ecNumber>2.7.11.1</ecNumber>
    </recommendedName>
    <alternativeName>
        <fullName>SRPK1-like kinase</fullName>
    </alternativeName>
</protein>